<keyword id="KW-0274">FAD</keyword>
<keyword id="KW-0285">Flavoprotein</keyword>
<keyword id="KW-0521">NADP</keyword>
<keyword id="KW-0560">Oxidoreductase</keyword>
<sequence>MSVREDRNVYDVTVIGGGPTGMFAAFYGGLRQMNVKIIESLPQLGGQLAALYPEKYIYDIAGFPKVRAQELVDQLKEQLSRFSPTICLNQSVEMLEKQEDGTFKLTTDKEIHYSKTVIITAGNGAFQPRRLEIDSASQYEGKNLHYFISDLQQFAGKRVLVCGGGDSAVDWSLMLEPIAASVTIVHRRDKFRAHEHSVEQLMNSRVQVKTPYVPAELIGDEQGIRQVVLEHVKEGAKETIDVDAVIVNYGFISSLGPIKNWGLDIEKNSIKVNSRMETNIPGVYAAGDICTYDGKIKLIACGFGEAPIAISSAKTYIDPTARMQPAHSSSLF</sequence>
<evidence type="ECO:0000255" key="1">
    <source>
        <dbReference type="HAMAP-Rule" id="MF_01685"/>
    </source>
</evidence>
<protein>
    <recommendedName>
        <fullName evidence="1">Ferredoxin--NADP reductase</fullName>
        <shortName evidence="1">FNR</shortName>
        <shortName evidence="1">Fd-NADP(+) reductase</shortName>
        <ecNumber evidence="1">1.18.1.2</ecNumber>
    </recommendedName>
</protein>
<comment type="catalytic activity">
    <reaction evidence="1">
        <text>2 reduced [2Fe-2S]-[ferredoxin] + NADP(+) + H(+) = 2 oxidized [2Fe-2S]-[ferredoxin] + NADPH</text>
        <dbReference type="Rhea" id="RHEA:20125"/>
        <dbReference type="Rhea" id="RHEA-COMP:10000"/>
        <dbReference type="Rhea" id="RHEA-COMP:10001"/>
        <dbReference type="ChEBI" id="CHEBI:15378"/>
        <dbReference type="ChEBI" id="CHEBI:33737"/>
        <dbReference type="ChEBI" id="CHEBI:33738"/>
        <dbReference type="ChEBI" id="CHEBI:57783"/>
        <dbReference type="ChEBI" id="CHEBI:58349"/>
        <dbReference type="EC" id="1.18.1.2"/>
    </reaction>
</comment>
<comment type="cofactor">
    <cofactor evidence="1">
        <name>FAD</name>
        <dbReference type="ChEBI" id="CHEBI:57692"/>
    </cofactor>
    <text evidence="1">Binds 1 FAD per subunit.</text>
</comment>
<comment type="subunit">
    <text evidence="1">Homodimer.</text>
</comment>
<comment type="similarity">
    <text evidence="1">Belongs to the ferredoxin--NADP reductase type 2 family.</text>
</comment>
<proteinExistence type="inferred from homology"/>
<accession>A4ISE6</accession>
<dbReference type="EC" id="1.18.1.2" evidence="1"/>
<dbReference type="EMBL" id="CP000557">
    <property type="protein sequence ID" value="ABO68250.1"/>
    <property type="molecule type" value="Genomic_DNA"/>
</dbReference>
<dbReference type="SMR" id="A4ISE6"/>
<dbReference type="KEGG" id="gtn:GTNG_2905"/>
<dbReference type="eggNOG" id="COG0492">
    <property type="taxonomic scope" value="Bacteria"/>
</dbReference>
<dbReference type="HOGENOM" id="CLU_031864_5_5_9"/>
<dbReference type="Proteomes" id="UP000001578">
    <property type="component" value="Chromosome"/>
</dbReference>
<dbReference type="GO" id="GO:0004324">
    <property type="term" value="F:ferredoxin-NADP+ reductase activity"/>
    <property type="evidence" value="ECO:0007669"/>
    <property type="project" value="UniProtKB-UniRule"/>
</dbReference>
<dbReference type="GO" id="GO:0050660">
    <property type="term" value="F:flavin adenine dinucleotide binding"/>
    <property type="evidence" value="ECO:0007669"/>
    <property type="project" value="UniProtKB-UniRule"/>
</dbReference>
<dbReference type="GO" id="GO:0050661">
    <property type="term" value="F:NADP binding"/>
    <property type="evidence" value="ECO:0007669"/>
    <property type="project" value="UniProtKB-UniRule"/>
</dbReference>
<dbReference type="Gene3D" id="3.50.50.60">
    <property type="entry name" value="FAD/NAD(P)-binding domain"/>
    <property type="match status" value="2"/>
</dbReference>
<dbReference type="HAMAP" id="MF_01685">
    <property type="entry name" value="FENR2"/>
    <property type="match status" value="1"/>
</dbReference>
<dbReference type="InterPro" id="IPR036188">
    <property type="entry name" value="FAD/NAD-bd_sf"/>
</dbReference>
<dbReference type="InterPro" id="IPR023753">
    <property type="entry name" value="FAD/NAD-binding_dom"/>
</dbReference>
<dbReference type="InterPro" id="IPR022890">
    <property type="entry name" value="Fd--NADP_Rdtase_type_2"/>
</dbReference>
<dbReference type="InterPro" id="IPR050097">
    <property type="entry name" value="Ferredoxin-NADP_redctase_2"/>
</dbReference>
<dbReference type="PANTHER" id="PTHR48105">
    <property type="entry name" value="THIOREDOXIN REDUCTASE 1-RELATED-RELATED"/>
    <property type="match status" value="1"/>
</dbReference>
<dbReference type="Pfam" id="PF07992">
    <property type="entry name" value="Pyr_redox_2"/>
    <property type="match status" value="1"/>
</dbReference>
<dbReference type="PRINTS" id="PR00368">
    <property type="entry name" value="FADPNR"/>
</dbReference>
<dbReference type="PRINTS" id="PR00469">
    <property type="entry name" value="PNDRDTASEII"/>
</dbReference>
<dbReference type="SUPFAM" id="SSF51905">
    <property type="entry name" value="FAD/NAD(P)-binding domain"/>
    <property type="match status" value="1"/>
</dbReference>
<gene>
    <name type="ordered locus">GTNG_2905</name>
</gene>
<feature type="chain" id="PRO_0000364841" description="Ferredoxin--NADP reductase">
    <location>
        <begin position="1"/>
        <end position="332"/>
    </location>
</feature>
<feature type="binding site" evidence="1">
    <location>
        <position position="20"/>
    </location>
    <ligand>
        <name>FAD</name>
        <dbReference type="ChEBI" id="CHEBI:57692"/>
    </ligand>
</feature>
<feature type="binding site" evidence="1">
    <location>
        <position position="39"/>
    </location>
    <ligand>
        <name>FAD</name>
        <dbReference type="ChEBI" id="CHEBI:57692"/>
    </ligand>
</feature>
<feature type="binding site" evidence="1">
    <location>
        <position position="47"/>
    </location>
    <ligand>
        <name>FAD</name>
        <dbReference type="ChEBI" id="CHEBI:57692"/>
    </ligand>
</feature>
<feature type="binding site" evidence="1">
    <location>
        <position position="52"/>
    </location>
    <ligand>
        <name>FAD</name>
        <dbReference type="ChEBI" id="CHEBI:57692"/>
    </ligand>
</feature>
<feature type="binding site" evidence="1">
    <location>
        <position position="92"/>
    </location>
    <ligand>
        <name>FAD</name>
        <dbReference type="ChEBI" id="CHEBI:57692"/>
    </ligand>
</feature>
<feature type="binding site" evidence="1">
    <location>
        <position position="126"/>
    </location>
    <ligand>
        <name>FAD</name>
        <dbReference type="ChEBI" id="CHEBI:57692"/>
    </ligand>
</feature>
<feature type="binding site" evidence="1">
    <location>
        <position position="288"/>
    </location>
    <ligand>
        <name>FAD</name>
        <dbReference type="ChEBI" id="CHEBI:57692"/>
    </ligand>
</feature>
<feature type="binding site" evidence="1">
    <location>
        <position position="329"/>
    </location>
    <ligand>
        <name>FAD</name>
        <dbReference type="ChEBI" id="CHEBI:57692"/>
    </ligand>
</feature>
<name>FENR_GEOTN</name>
<organism>
    <name type="scientific">Geobacillus thermodenitrificans (strain NG80-2)</name>
    <dbReference type="NCBI Taxonomy" id="420246"/>
    <lineage>
        <taxon>Bacteria</taxon>
        <taxon>Bacillati</taxon>
        <taxon>Bacillota</taxon>
        <taxon>Bacilli</taxon>
        <taxon>Bacillales</taxon>
        <taxon>Anoxybacillaceae</taxon>
        <taxon>Geobacillus</taxon>
    </lineage>
</organism>
<reference key="1">
    <citation type="journal article" date="2007" name="Proc. Natl. Acad. Sci. U.S.A.">
        <title>Genome and proteome of long-chain alkane degrading Geobacillus thermodenitrificans NG80-2 isolated from a deep-subsurface oil reservoir.</title>
        <authorList>
            <person name="Feng L."/>
            <person name="Wang W."/>
            <person name="Cheng J."/>
            <person name="Ren Y."/>
            <person name="Zhao G."/>
            <person name="Gao C."/>
            <person name="Tang Y."/>
            <person name="Liu X."/>
            <person name="Han W."/>
            <person name="Peng X."/>
            <person name="Liu R."/>
            <person name="Wang L."/>
        </authorList>
    </citation>
    <scope>NUCLEOTIDE SEQUENCE [LARGE SCALE GENOMIC DNA]</scope>
    <source>
        <strain>NG80-2</strain>
    </source>
</reference>